<reference key="1">
    <citation type="journal article" date="2009" name="J. Bacteriol.">
        <title>Complete and draft genome sequences of six members of the Aquificales.</title>
        <authorList>
            <person name="Reysenbach A.-L."/>
            <person name="Hamamura N."/>
            <person name="Podar M."/>
            <person name="Griffiths E."/>
            <person name="Ferreira S."/>
            <person name="Hochstein R."/>
            <person name="Heidelberg J."/>
            <person name="Johnson J."/>
            <person name="Mead D."/>
            <person name="Pohorille A."/>
            <person name="Sarmiento M."/>
            <person name="Schweighofer K."/>
            <person name="Seshadri R."/>
            <person name="Voytek M.A."/>
        </authorList>
    </citation>
    <scope>NUCLEOTIDE SEQUENCE [LARGE SCALE GENOMIC DNA]</scope>
    <source>
        <strain>DSM 15241 / OCM 825 / Az-Fu1</strain>
    </source>
</reference>
<gene>
    <name evidence="1" type="primary">nuoK</name>
    <name type="ordered locus">SULAZ_0281</name>
</gene>
<keyword id="KW-0997">Cell inner membrane</keyword>
<keyword id="KW-1003">Cell membrane</keyword>
<keyword id="KW-0472">Membrane</keyword>
<keyword id="KW-0520">NAD</keyword>
<keyword id="KW-0874">Quinone</keyword>
<keyword id="KW-1185">Reference proteome</keyword>
<keyword id="KW-1278">Translocase</keyword>
<keyword id="KW-0812">Transmembrane</keyword>
<keyword id="KW-1133">Transmembrane helix</keyword>
<keyword id="KW-0813">Transport</keyword>
<keyword id="KW-0830">Ubiquinone</keyword>
<feature type="chain" id="PRO_0000390254" description="NADH-quinone oxidoreductase subunit K">
    <location>
        <begin position="1"/>
        <end position="100"/>
    </location>
</feature>
<feature type="transmembrane region" description="Helical" evidence="1">
    <location>
        <begin position="4"/>
        <end position="24"/>
    </location>
</feature>
<feature type="transmembrane region" description="Helical" evidence="1">
    <location>
        <begin position="28"/>
        <end position="48"/>
    </location>
</feature>
<feature type="transmembrane region" description="Helical" evidence="1">
    <location>
        <begin position="60"/>
        <end position="80"/>
    </location>
</feature>
<dbReference type="EC" id="7.1.1.-" evidence="1"/>
<dbReference type="EMBL" id="CP001229">
    <property type="protein sequence ID" value="ACN99053.1"/>
    <property type="molecule type" value="Genomic_DNA"/>
</dbReference>
<dbReference type="RefSeq" id="WP_012674373.1">
    <property type="nucleotide sequence ID" value="NC_012438.1"/>
</dbReference>
<dbReference type="SMR" id="C1DT39"/>
<dbReference type="STRING" id="204536.SULAZ_0281"/>
<dbReference type="KEGG" id="saf:SULAZ_0281"/>
<dbReference type="eggNOG" id="COG0713">
    <property type="taxonomic scope" value="Bacteria"/>
</dbReference>
<dbReference type="HOGENOM" id="CLU_144724_0_0_0"/>
<dbReference type="OrthoDB" id="9810120at2"/>
<dbReference type="Proteomes" id="UP000001369">
    <property type="component" value="Chromosome"/>
</dbReference>
<dbReference type="GO" id="GO:0030964">
    <property type="term" value="C:NADH dehydrogenase complex"/>
    <property type="evidence" value="ECO:0007669"/>
    <property type="project" value="TreeGrafter"/>
</dbReference>
<dbReference type="GO" id="GO:0005886">
    <property type="term" value="C:plasma membrane"/>
    <property type="evidence" value="ECO:0007669"/>
    <property type="project" value="UniProtKB-SubCell"/>
</dbReference>
<dbReference type="GO" id="GO:0050136">
    <property type="term" value="F:NADH:ubiquinone reductase (non-electrogenic) activity"/>
    <property type="evidence" value="ECO:0007669"/>
    <property type="project" value="UniProtKB-UniRule"/>
</dbReference>
<dbReference type="GO" id="GO:0048038">
    <property type="term" value="F:quinone binding"/>
    <property type="evidence" value="ECO:0007669"/>
    <property type="project" value="UniProtKB-KW"/>
</dbReference>
<dbReference type="GO" id="GO:0042773">
    <property type="term" value="P:ATP synthesis coupled electron transport"/>
    <property type="evidence" value="ECO:0007669"/>
    <property type="project" value="InterPro"/>
</dbReference>
<dbReference type="FunFam" id="1.10.287.3510:FF:000001">
    <property type="entry name" value="NADH-quinone oxidoreductase subunit K"/>
    <property type="match status" value="1"/>
</dbReference>
<dbReference type="Gene3D" id="1.10.287.3510">
    <property type="match status" value="1"/>
</dbReference>
<dbReference type="HAMAP" id="MF_01456">
    <property type="entry name" value="NDH1_NuoK"/>
    <property type="match status" value="1"/>
</dbReference>
<dbReference type="InterPro" id="IPR001133">
    <property type="entry name" value="NADH_UbQ_OxRdtase_chain4L/K"/>
</dbReference>
<dbReference type="InterPro" id="IPR039428">
    <property type="entry name" value="NUOK/Mnh_C1-like"/>
</dbReference>
<dbReference type="NCBIfam" id="NF004320">
    <property type="entry name" value="PRK05715.1-2"/>
    <property type="match status" value="1"/>
</dbReference>
<dbReference type="NCBIfam" id="NF004321">
    <property type="entry name" value="PRK05715.1-3"/>
    <property type="match status" value="1"/>
</dbReference>
<dbReference type="NCBIfam" id="NF004323">
    <property type="entry name" value="PRK05715.1-5"/>
    <property type="match status" value="1"/>
</dbReference>
<dbReference type="PANTHER" id="PTHR11434:SF16">
    <property type="entry name" value="NADH-UBIQUINONE OXIDOREDUCTASE CHAIN 4L"/>
    <property type="match status" value="1"/>
</dbReference>
<dbReference type="PANTHER" id="PTHR11434">
    <property type="entry name" value="NADH-UBIQUINONE OXIDOREDUCTASE SUBUNIT ND4L"/>
    <property type="match status" value="1"/>
</dbReference>
<dbReference type="Pfam" id="PF00420">
    <property type="entry name" value="Oxidored_q2"/>
    <property type="match status" value="1"/>
</dbReference>
<evidence type="ECO:0000255" key="1">
    <source>
        <dbReference type="HAMAP-Rule" id="MF_01456"/>
    </source>
</evidence>
<proteinExistence type="inferred from homology"/>
<sequence>MVPYEYYVALSGLLMVLGFIGVIVRKNIIAMLISTELMLNAVNVAFVAFDMKLHDVVGQVFVFFILTIAAAEAAIGLGLIMAIYRMKKDVDVEKLTELKG</sequence>
<organism>
    <name type="scientific">Sulfurihydrogenibium azorense (strain DSM 15241 / OCM 825 / Az-Fu1)</name>
    <dbReference type="NCBI Taxonomy" id="204536"/>
    <lineage>
        <taxon>Bacteria</taxon>
        <taxon>Pseudomonadati</taxon>
        <taxon>Aquificota</taxon>
        <taxon>Aquificia</taxon>
        <taxon>Aquificales</taxon>
        <taxon>Hydrogenothermaceae</taxon>
        <taxon>Sulfurihydrogenibium</taxon>
    </lineage>
</organism>
<comment type="function">
    <text evidence="1">NDH-1 shuttles electrons from NADH, via FMN and iron-sulfur (Fe-S) centers, to quinones in the respiratory chain. The immediate electron acceptor for the enzyme in this species is believed to be ubiquinone. Couples the redox reaction to proton translocation (for every two electrons transferred, four hydrogen ions are translocated across the cytoplasmic membrane), and thus conserves the redox energy in a proton gradient.</text>
</comment>
<comment type="catalytic activity">
    <reaction evidence="1">
        <text>a quinone + NADH + 5 H(+)(in) = a quinol + NAD(+) + 4 H(+)(out)</text>
        <dbReference type="Rhea" id="RHEA:57888"/>
        <dbReference type="ChEBI" id="CHEBI:15378"/>
        <dbReference type="ChEBI" id="CHEBI:24646"/>
        <dbReference type="ChEBI" id="CHEBI:57540"/>
        <dbReference type="ChEBI" id="CHEBI:57945"/>
        <dbReference type="ChEBI" id="CHEBI:132124"/>
    </reaction>
</comment>
<comment type="subunit">
    <text evidence="1">NDH-1 is composed of 14 different subunits. Subunits NuoA, H, J, K, L, M, N constitute the membrane sector of the complex.</text>
</comment>
<comment type="subcellular location">
    <subcellularLocation>
        <location evidence="1">Cell inner membrane</location>
        <topology evidence="1">Multi-pass membrane protein</topology>
    </subcellularLocation>
</comment>
<comment type="similarity">
    <text evidence="1">Belongs to the complex I subunit 4L family.</text>
</comment>
<accession>C1DT39</accession>
<protein>
    <recommendedName>
        <fullName evidence="1">NADH-quinone oxidoreductase subunit K</fullName>
        <ecNumber evidence="1">7.1.1.-</ecNumber>
    </recommendedName>
    <alternativeName>
        <fullName evidence="1">NADH dehydrogenase I subunit K</fullName>
    </alternativeName>
    <alternativeName>
        <fullName evidence="1">NDH-1 subunit K</fullName>
    </alternativeName>
</protein>
<name>NUOK_SULAA</name>